<name>RUVB_SHEHH</name>
<proteinExistence type="inferred from homology"/>
<organism>
    <name type="scientific">Shewanella halifaxensis (strain HAW-EB4)</name>
    <dbReference type="NCBI Taxonomy" id="458817"/>
    <lineage>
        <taxon>Bacteria</taxon>
        <taxon>Pseudomonadati</taxon>
        <taxon>Pseudomonadota</taxon>
        <taxon>Gammaproteobacteria</taxon>
        <taxon>Alteromonadales</taxon>
        <taxon>Shewanellaceae</taxon>
        <taxon>Shewanella</taxon>
    </lineage>
</organism>
<dbReference type="EC" id="3.6.4.-" evidence="1"/>
<dbReference type="EMBL" id="CP000931">
    <property type="protein sequence ID" value="ABZ76487.1"/>
    <property type="molecule type" value="Genomic_DNA"/>
</dbReference>
<dbReference type="RefSeq" id="WP_012277019.1">
    <property type="nucleotide sequence ID" value="NC_010334.1"/>
</dbReference>
<dbReference type="SMR" id="B0TSA7"/>
<dbReference type="STRING" id="458817.Shal_1922"/>
<dbReference type="KEGG" id="shl:Shal_1922"/>
<dbReference type="eggNOG" id="COG2255">
    <property type="taxonomic scope" value="Bacteria"/>
</dbReference>
<dbReference type="HOGENOM" id="CLU_055599_1_0_6"/>
<dbReference type="OrthoDB" id="9804478at2"/>
<dbReference type="Proteomes" id="UP000001317">
    <property type="component" value="Chromosome"/>
</dbReference>
<dbReference type="GO" id="GO:0005737">
    <property type="term" value="C:cytoplasm"/>
    <property type="evidence" value="ECO:0007669"/>
    <property type="project" value="UniProtKB-SubCell"/>
</dbReference>
<dbReference type="GO" id="GO:0048476">
    <property type="term" value="C:Holliday junction resolvase complex"/>
    <property type="evidence" value="ECO:0007669"/>
    <property type="project" value="UniProtKB-UniRule"/>
</dbReference>
<dbReference type="GO" id="GO:0005524">
    <property type="term" value="F:ATP binding"/>
    <property type="evidence" value="ECO:0007669"/>
    <property type="project" value="UniProtKB-UniRule"/>
</dbReference>
<dbReference type="GO" id="GO:0016887">
    <property type="term" value="F:ATP hydrolysis activity"/>
    <property type="evidence" value="ECO:0007669"/>
    <property type="project" value="InterPro"/>
</dbReference>
<dbReference type="GO" id="GO:0000400">
    <property type="term" value="F:four-way junction DNA binding"/>
    <property type="evidence" value="ECO:0007669"/>
    <property type="project" value="UniProtKB-UniRule"/>
</dbReference>
<dbReference type="GO" id="GO:0009378">
    <property type="term" value="F:four-way junction helicase activity"/>
    <property type="evidence" value="ECO:0007669"/>
    <property type="project" value="InterPro"/>
</dbReference>
<dbReference type="GO" id="GO:0006310">
    <property type="term" value="P:DNA recombination"/>
    <property type="evidence" value="ECO:0007669"/>
    <property type="project" value="UniProtKB-UniRule"/>
</dbReference>
<dbReference type="GO" id="GO:0006281">
    <property type="term" value="P:DNA repair"/>
    <property type="evidence" value="ECO:0007669"/>
    <property type="project" value="UniProtKB-UniRule"/>
</dbReference>
<dbReference type="CDD" id="cd00009">
    <property type="entry name" value="AAA"/>
    <property type="match status" value="1"/>
</dbReference>
<dbReference type="FunFam" id="1.10.10.10:FF:000086">
    <property type="entry name" value="Holliday junction ATP-dependent DNA helicase RuvB"/>
    <property type="match status" value="1"/>
</dbReference>
<dbReference type="FunFam" id="1.10.8.60:FF:000023">
    <property type="entry name" value="Holliday junction ATP-dependent DNA helicase RuvB"/>
    <property type="match status" value="1"/>
</dbReference>
<dbReference type="FunFam" id="3.40.50.300:FF:000073">
    <property type="entry name" value="Holliday junction ATP-dependent DNA helicase RuvB"/>
    <property type="match status" value="1"/>
</dbReference>
<dbReference type="Gene3D" id="1.10.8.60">
    <property type="match status" value="1"/>
</dbReference>
<dbReference type="Gene3D" id="3.40.50.300">
    <property type="entry name" value="P-loop containing nucleotide triphosphate hydrolases"/>
    <property type="match status" value="1"/>
</dbReference>
<dbReference type="Gene3D" id="1.10.10.10">
    <property type="entry name" value="Winged helix-like DNA-binding domain superfamily/Winged helix DNA-binding domain"/>
    <property type="match status" value="1"/>
</dbReference>
<dbReference type="HAMAP" id="MF_00016">
    <property type="entry name" value="DNA_HJ_migration_RuvB"/>
    <property type="match status" value="1"/>
</dbReference>
<dbReference type="InterPro" id="IPR003593">
    <property type="entry name" value="AAA+_ATPase"/>
</dbReference>
<dbReference type="InterPro" id="IPR041445">
    <property type="entry name" value="AAA_lid_4"/>
</dbReference>
<dbReference type="InterPro" id="IPR004605">
    <property type="entry name" value="DNA_helicase_Holl-junc_RuvB"/>
</dbReference>
<dbReference type="InterPro" id="IPR027417">
    <property type="entry name" value="P-loop_NTPase"/>
</dbReference>
<dbReference type="InterPro" id="IPR008824">
    <property type="entry name" value="RuvB-like_N"/>
</dbReference>
<dbReference type="InterPro" id="IPR008823">
    <property type="entry name" value="RuvB_C"/>
</dbReference>
<dbReference type="InterPro" id="IPR036388">
    <property type="entry name" value="WH-like_DNA-bd_sf"/>
</dbReference>
<dbReference type="InterPro" id="IPR036390">
    <property type="entry name" value="WH_DNA-bd_sf"/>
</dbReference>
<dbReference type="NCBIfam" id="NF000868">
    <property type="entry name" value="PRK00080.1"/>
    <property type="match status" value="1"/>
</dbReference>
<dbReference type="NCBIfam" id="TIGR00635">
    <property type="entry name" value="ruvB"/>
    <property type="match status" value="1"/>
</dbReference>
<dbReference type="PANTHER" id="PTHR42848">
    <property type="match status" value="1"/>
</dbReference>
<dbReference type="PANTHER" id="PTHR42848:SF1">
    <property type="entry name" value="HOLLIDAY JUNCTION BRANCH MIGRATION COMPLEX SUBUNIT RUVB"/>
    <property type="match status" value="1"/>
</dbReference>
<dbReference type="Pfam" id="PF17864">
    <property type="entry name" value="AAA_lid_4"/>
    <property type="match status" value="1"/>
</dbReference>
<dbReference type="Pfam" id="PF05491">
    <property type="entry name" value="RuvB_C"/>
    <property type="match status" value="1"/>
</dbReference>
<dbReference type="Pfam" id="PF05496">
    <property type="entry name" value="RuvB_N"/>
    <property type="match status" value="1"/>
</dbReference>
<dbReference type="SMART" id="SM00382">
    <property type="entry name" value="AAA"/>
    <property type="match status" value="1"/>
</dbReference>
<dbReference type="SUPFAM" id="SSF52540">
    <property type="entry name" value="P-loop containing nucleoside triphosphate hydrolases"/>
    <property type="match status" value="1"/>
</dbReference>
<dbReference type="SUPFAM" id="SSF46785">
    <property type="entry name" value="Winged helix' DNA-binding domain"/>
    <property type="match status" value="1"/>
</dbReference>
<sequence length="337" mass="37294">MIEADRLIHPQIIDREEAEAVDRAMRPKMLDEYTGQDDTRAQLKIFIEAAQKRGEALDHMLIYGPPGLGKTTLAMIVANEMGVNIKSTSGPVLEKAGDLAALLTNLEPNDVLFIDEIHRLSPVVEEILYPAMEDYQLDIMIGEGPAARSIKLDLPPFTLVGATTRAGALTSPLRARFGIPLRLEFYNVKDLSSIVARSAKVMALEIDDEGAVEIARRSRGTPRIANRLLRRVRDFAEVKHSGDVTKVIAEAALDMLDVDAEGFDYMDRKLLLAIIDKFMGGPVGLDNLAAAIGEERETIEDVLEPFLIQQGFIQRTPRGRIATPRAYNHFNIIKPDA</sequence>
<protein>
    <recommendedName>
        <fullName evidence="1">Holliday junction branch migration complex subunit RuvB</fullName>
        <ecNumber evidence="1">3.6.4.-</ecNumber>
    </recommendedName>
</protein>
<feature type="chain" id="PRO_1000074101" description="Holliday junction branch migration complex subunit RuvB">
    <location>
        <begin position="1"/>
        <end position="337"/>
    </location>
</feature>
<feature type="region of interest" description="Large ATPase domain (RuvB-L)" evidence="1">
    <location>
        <begin position="4"/>
        <end position="186"/>
    </location>
</feature>
<feature type="region of interest" description="Small ATPAse domain (RuvB-S)" evidence="1">
    <location>
        <begin position="187"/>
        <end position="257"/>
    </location>
</feature>
<feature type="region of interest" description="Head domain (RuvB-H)" evidence="1">
    <location>
        <begin position="260"/>
        <end position="337"/>
    </location>
</feature>
<feature type="binding site" evidence="1">
    <location>
        <position position="26"/>
    </location>
    <ligand>
        <name>ATP</name>
        <dbReference type="ChEBI" id="CHEBI:30616"/>
    </ligand>
</feature>
<feature type="binding site" evidence="1">
    <location>
        <position position="67"/>
    </location>
    <ligand>
        <name>ATP</name>
        <dbReference type="ChEBI" id="CHEBI:30616"/>
    </ligand>
</feature>
<feature type="binding site" evidence="1">
    <location>
        <position position="70"/>
    </location>
    <ligand>
        <name>ATP</name>
        <dbReference type="ChEBI" id="CHEBI:30616"/>
    </ligand>
</feature>
<feature type="binding site" evidence="1">
    <location>
        <position position="71"/>
    </location>
    <ligand>
        <name>ATP</name>
        <dbReference type="ChEBI" id="CHEBI:30616"/>
    </ligand>
</feature>
<feature type="binding site" evidence="1">
    <location>
        <position position="71"/>
    </location>
    <ligand>
        <name>Mg(2+)</name>
        <dbReference type="ChEBI" id="CHEBI:18420"/>
    </ligand>
</feature>
<feature type="binding site" evidence="1">
    <location>
        <position position="72"/>
    </location>
    <ligand>
        <name>ATP</name>
        <dbReference type="ChEBI" id="CHEBI:30616"/>
    </ligand>
</feature>
<feature type="binding site" evidence="1">
    <location>
        <begin position="133"/>
        <end position="135"/>
    </location>
    <ligand>
        <name>ATP</name>
        <dbReference type="ChEBI" id="CHEBI:30616"/>
    </ligand>
</feature>
<feature type="binding site" evidence="1">
    <location>
        <position position="176"/>
    </location>
    <ligand>
        <name>ATP</name>
        <dbReference type="ChEBI" id="CHEBI:30616"/>
    </ligand>
</feature>
<feature type="binding site" evidence="1">
    <location>
        <position position="186"/>
    </location>
    <ligand>
        <name>ATP</name>
        <dbReference type="ChEBI" id="CHEBI:30616"/>
    </ligand>
</feature>
<feature type="binding site" evidence="1">
    <location>
        <position position="223"/>
    </location>
    <ligand>
        <name>ATP</name>
        <dbReference type="ChEBI" id="CHEBI:30616"/>
    </ligand>
</feature>
<feature type="binding site" evidence="1">
    <location>
        <position position="296"/>
    </location>
    <ligand>
        <name>DNA</name>
        <dbReference type="ChEBI" id="CHEBI:16991"/>
    </ligand>
</feature>
<feature type="binding site" evidence="1">
    <location>
        <position position="315"/>
    </location>
    <ligand>
        <name>DNA</name>
        <dbReference type="ChEBI" id="CHEBI:16991"/>
    </ligand>
</feature>
<feature type="binding site" evidence="1">
    <location>
        <position position="320"/>
    </location>
    <ligand>
        <name>DNA</name>
        <dbReference type="ChEBI" id="CHEBI:16991"/>
    </ligand>
</feature>
<keyword id="KW-0067">ATP-binding</keyword>
<keyword id="KW-0963">Cytoplasm</keyword>
<keyword id="KW-0227">DNA damage</keyword>
<keyword id="KW-0233">DNA recombination</keyword>
<keyword id="KW-0234">DNA repair</keyword>
<keyword id="KW-0238">DNA-binding</keyword>
<keyword id="KW-0378">Hydrolase</keyword>
<keyword id="KW-0547">Nucleotide-binding</keyword>
<reference key="1">
    <citation type="submission" date="2008-01" db="EMBL/GenBank/DDBJ databases">
        <title>Complete sequence of Shewanella halifaxensis HAW-EB4.</title>
        <authorList>
            <consortium name="US DOE Joint Genome Institute"/>
            <person name="Copeland A."/>
            <person name="Lucas S."/>
            <person name="Lapidus A."/>
            <person name="Glavina del Rio T."/>
            <person name="Dalin E."/>
            <person name="Tice H."/>
            <person name="Bruce D."/>
            <person name="Goodwin L."/>
            <person name="Pitluck S."/>
            <person name="Sims D."/>
            <person name="Brettin T."/>
            <person name="Detter J.C."/>
            <person name="Han C."/>
            <person name="Kuske C.R."/>
            <person name="Schmutz J."/>
            <person name="Larimer F."/>
            <person name="Land M."/>
            <person name="Hauser L."/>
            <person name="Kyrpides N."/>
            <person name="Kim E."/>
            <person name="Zhao J.-S."/>
            <person name="Richardson P."/>
        </authorList>
    </citation>
    <scope>NUCLEOTIDE SEQUENCE [LARGE SCALE GENOMIC DNA]</scope>
    <source>
        <strain>HAW-EB4</strain>
    </source>
</reference>
<evidence type="ECO:0000255" key="1">
    <source>
        <dbReference type="HAMAP-Rule" id="MF_00016"/>
    </source>
</evidence>
<accession>B0TSA7</accession>
<comment type="function">
    <text evidence="1">The RuvA-RuvB-RuvC complex processes Holliday junction (HJ) DNA during genetic recombination and DNA repair, while the RuvA-RuvB complex plays an important role in the rescue of blocked DNA replication forks via replication fork reversal (RFR). RuvA specifically binds to HJ cruciform DNA, conferring on it an open structure. The RuvB hexamer acts as an ATP-dependent pump, pulling dsDNA into and through the RuvAB complex. RuvB forms 2 homohexamers on either side of HJ DNA bound by 1 or 2 RuvA tetramers; 4 subunits per hexamer contact DNA at a time. Coordinated motions by a converter formed by DNA-disengaged RuvB subunits stimulates ATP hydrolysis and nucleotide exchange. Immobilization of the converter enables RuvB to convert the ATP-contained energy into a lever motion, pulling 2 nucleotides of DNA out of the RuvA tetramer per ATP hydrolyzed, thus driving DNA branch migration. The RuvB motors rotate together with the DNA substrate, which together with the progressing nucleotide cycle form the mechanistic basis for DNA recombination by continuous HJ branch migration. Branch migration allows RuvC to scan DNA until it finds its consensus sequence, where it cleaves and resolves cruciform DNA.</text>
</comment>
<comment type="catalytic activity">
    <reaction evidence="1">
        <text>ATP + H2O = ADP + phosphate + H(+)</text>
        <dbReference type="Rhea" id="RHEA:13065"/>
        <dbReference type="ChEBI" id="CHEBI:15377"/>
        <dbReference type="ChEBI" id="CHEBI:15378"/>
        <dbReference type="ChEBI" id="CHEBI:30616"/>
        <dbReference type="ChEBI" id="CHEBI:43474"/>
        <dbReference type="ChEBI" id="CHEBI:456216"/>
    </reaction>
</comment>
<comment type="subunit">
    <text evidence="1">Homohexamer. Forms an RuvA(8)-RuvB(12)-Holliday junction (HJ) complex. HJ DNA is sandwiched between 2 RuvA tetramers; dsDNA enters through RuvA and exits via RuvB. An RuvB hexamer assembles on each DNA strand where it exits the tetramer. Each RuvB hexamer is contacted by two RuvA subunits (via domain III) on 2 adjacent RuvB subunits; this complex drives branch migration. In the full resolvosome a probable DNA-RuvA(4)-RuvB(12)-RuvC(2) complex forms which resolves the HJ.</text>
</comment>
<comment type="subcellular location">
    <subcellularLocation>
        <location evidence="1">Cytoplasm</location>
    </subcellularLocation>
</comment>
<comment type="domain">
    <text evidence="1">Has 3 domains, the large (RuvB-L) and small ATPase (RuvB-S) domains and the C-terminal head (RuvB-H) domain. The head domain binds DNA, while the ATPase domains jointly bind ATP, ADP or are empty depending on the state of the subunit in the translocation cycle. During a single DNA translocation step the structure of each domain remains the same, but their relative positions change.</text>
</comment>
<comment type="similarity">
    <text evidence="1">Belongs to the RuvB family.</text>
</comment>
<gene>
    <name evidence="1" type="primary">ruvB</name>
    <name type="ordered locus">Shal_1922</name>
</gene>